<proteinExistence type="inferred from homology"/>
<protein>
    <recommendedName>
        <fullName evidence="1">23S rRNA (uracil(1939)-C(5))-methyltransferase RlmD</fullName>
        <ecNumber evidence="1">2.1.1.190</ecNumber>
    </recommendedName>
    <alternativeName>
        <fullName evidence="1">23S rRNA(m5U1939)-methyltransferase</fullName>
    </alternativeName>
</protein>
<dbReference type="EC" id="2.1.1.190" evidence="1"/>
<dbReference type="EMBL" id="CP000563">
    <property type="protein sequence ID" value="ABN62628.1"/>
    <property type="molecule type" value="Genomic_DNA"/>
</dbReference>
<dbReference type="RefSeq" id="WP_011847453.1">
    <property type="nucleotide sequence ID" value="NC_009052.1"/>
</dbReference>
<dbReference type="SMR" id="A3D7B5"/>
<dbReference type="STRING" id="325240.Sbal_3147"/>
<dbReference type="KEGG" id="sbl:Sbal_3147"/>
<dbReference type="HOGENOM" id="CLU_014689_8_2_6"/>
<dbReference type="OrthoDB" id="9804590at2"/>
<dbReference type="Proteomes" id="UP000001557">
    <property type="component" value="Chromosome"/>
</dbReference>
<dbReference type="GO" id="GO:0051539">
    <property type="term" value="F:4 iron, 4 sulfur cluster binding"/>
    <property type="evidence" value="ECO:0007669"/>
    <property type="project" value="UniProtKB-KW"/>
</dbReference>
<dbReference type="GO" id="GO:0005506">
    <property type="term" value="F:iron ion binding"/>
    <property type="evidence" value="ECO:0007669"/>
    <property type="project" value="UniProtKB-UniRule"/>
</dbReference>
<dbReference type="GO" id="GO:0003723">
    <property type="term" value="F:RNA binding"/>
    <property type="evidence" value="ECO:0007669"/>
    <property type="project" value="InterPro"/>
</dbReference>
<dbReference type="GO" id="GO:0070041">
    <property type="term" value="F:rRNA (uridine-C5-)-methyltransferase activity"/>
    <property type="evidence" value="ECO:0007669"/>
    <property type="project" value="UniProtKB-UniRule"/>
</dbReference>
<dbReference type="GO" id="GO:0070475">
    <property type="term" value="P:rRNA base methylation"/>
    <property type="evidence" value="ECO:0007669"/>
    <property type="project" value="TreeGrafter"/>
</dbReference>
<dbReference type="CDD" id="cd02440">
    <property type="entry name" value="AdoMet_MTases"/>
    <property type="match status" value="1"/>
</dbReference>
<dbReference type="FunFam" id="3.40.50.150:FF:000009">
    <property type="entry name" value="23S rRNA (Uracil(1939)-C(5))-methyltransferase RlmD"/>
    <property type="match status" value="1"/>
</dbReference>
<dbReference type="FunFam" id="2.40.50.140:FF:000097">
    <property type="entry name" value="23S rRNA (uracil(1939)-C(5))-methyltransferase RlmD"/>
    <property type="match status" value="1"/>
</dbReference>
<dbReference type="Gene3D" id="2.40.50.1070">
    <property type="match status" value="1"/>
</dbReference>
<dbReference type="Gene3D" id="2.40.50.140">
    <property type="entry name" value="Nucleic acid-binding proteins"/>
    <property type="match status" value="1"/>
</dbReference>
<dbReference type="Gene3D" id="3.40.50.150">
    <property type="entry name" value="Vaccinia Virus protein VP39"/>
    <property type="match status" value="1"/>
</dbReference>
<dbReference type="HAMAP" id="MF_01010">
    <property type="entry name" value="23SrRNA_methyltr_RlmD"/>
    <property type="match status" value="1"/>
</dbReference>
<dbReference type="InterPro" id="IPR001566">
    <property type="entry name" value="23S_rRNA_MeTrfase_RlmD"/>
</dbReference>
<dbReference type="InterPro" id="IPR030390">
    <property type="entry name" value="MeTrfase_TrmA_AS"/>
</dbReference>
<dbReference type="InterPro" id="IPR030391">
    <property type="entry name" value="MeTrfase_TrmA_CS"/>
</dbReference>
<dbReference type="InterPro" id="IPR012340">
    <property type="entry name" value="NA-bd_OB-fold"/>
</dbReference>
<dbReference type="InterPro" id="IPR029063">
    <property type="entry name" value="SAM-dependent_MTases_sf"/>
</dbReference>
<dbReference type="InterPro" id="IPR002792">
    <property type="entry name" value="TRAM_dom"/>
</dbReference>
<dbReference type="InterPro" id="IPR010280">
    <property type="entry name" value="U5_MeTrfase_fam"/>
</dbReference>
<dbReference type="NCBIfam" id="NF009639">
    <property type="entry name" value="PRK13168.1"/>
    <property type="match status" value="1"/>
</dbReference>
<dbReference type="NCBIfam" id="TIGR00479">
    <property type="entry name" value="rumA"/>
    <property type="match status" value="1"/>
</dbReference>
<dbReference type="PANTHER" id="PTHR11061:SF49">
    <property type="entry name" value="23S RRNA (URACIL(1939)-C(5))-METHYLTRANSFERASE RLMD"/>
    <property type="match status" value="1"/>
</dbReference>
<dbReference type="PANTHER" id="PTHR11061">
    <property type="entry name" value="RNA M5U METHYLTRANSFERASE"/>
    <property type="match status" value="1"/>
</dbReference>
<dbReference type="Pfam" id="PF01938">
    <property type="entry name" value="TRAM"/>
    <property type="match status" value="1"/>
</dbReference>
<dbReference type="Pfam" id="PF05958">
    <property type="entry name" value="tRNA_U5-meth_tr"/>
    <property type="match status" value="1"/>
</dbReference>
<dbReference type="SUPFAM" id="SSF50249">
    <property type="entry name" value="Nucleic acid-binding proteins"/>
    <property type="match status" value="1"/>
</dbReference>
<dbReference type="SUPFAM" id="SSF53335">
    <property type="entry name" value="S-adenosyl-L-methionine-dependent methyltransferases"/>
    <property type="match status" value="1"/>
</dbReference>
<dbReference type="PROSITE" id="PS51687">
    <property type="entry name" value="SAM_MT_RNA_M5U"/>
    <property type="match status" value="1"/>
</dbReference>
<dbReference type="PROSITE" id="PS50926">
    <property type="entry name" value="TRAM"/>
    <property type="match status" value="1"/>
</dbReference>
<dbReference type="PROSITE" id="PS01230">
    <property type="entry name" value="TRMA_1"/>
    <property type="match status" value="1"/>
</dbReference>
<dbReference type="PROSITE" id="PS01231">
    <property type="entry name" value="TRMA_2"/>
    <property type="match status" value="1"/>
</dbReference>
<gene>
    <name evidence="1" type="primary">rlmD</name>
    <name type="synonym">rumA</name>
    <name type="ordered locus">Sbal_3147</name>
</gene>
<name>RLMD_SHEB5</name>
<organism>
    <name type="scientific">Shewanella baltica (strain OS155 / ATCC BAA-1091)</name>
    <dbReference type="NCBI Taxonomy" id="325240"/>
    <lineage>
        <taxon>Bacteria</taxon>
        <taxon>Pseudomonadati</taxon>
        <taxon>Pseudomonadota</taxon>
        <taxon>Gammaproteobacteria</taxon>
        <taxon>Alteromonadales</taxon>
        <taxon>Shewanellaceae</taxon>
        <taxon>Shewanella</taxon>
    </lineage>
</organism>
<evidence type="ECO:0000255" key="1">
    <source>
        <dbReference type="HAMAP-Rule" id="MF_01010"/>
    </source>
</evidence>
<sequence length="450" mass="49243">MAQFFKAKPNSSKQLSAKLSLSVNQLDHLGAGIAQHQGKVVFIPGALPDETVTVQFTEQKKNYARAKLIKVDTPSSERVEPECPHYHTCGGCDLQHMSLSGQREHKEAALLDIMAKFAGAEGGTLSPELTGEGWHYRRRARLATLFDKNTKHLSLGFRAASSSNVVPISQCQVLAKPLSDLIVPFAKLLNQLTAKASLGHLELIAADNGHFAVLRITKALNDKDLAKLSAFAEQHQIHICLQDNEGQFQGVGAELVLPVYQLLDDKAESDAVSLSFTPGNFVQVNGQINKAMVAQAMDWLAPALDERILDLFCGMGNFSLPLAKMGADVIGVEGVAEMVTQARVNAKANNLDKLTFFHGDLSADLSLEPWMGKIDKLLLDPARAGAFESLQWLKKMKPRKVVYVSCNPASLARDSAVLLERGYRLQQLGLIDMFPQTHHIEAMALFELTK</sequence>
<accession>A3D7B5</accession>
<reference key="1">
    <citation type="submission" date="2007-02" db="EMBL/GenBank/DDBJ databases">
        <title>Complete sequence of chromosome of Shewanella baltica OS155.</title>
        <authorList>
            <consortium name="US DOE Joint Genome Institute"/>
            <person name="Copeland A."/>
            <person name="Lucas S."/>
            <person name="Lapidus A."/>
            <person name="Barry K."/>
            <person name="Detter J.C."/>
            <person name="Glavina del Rio T."/>
            <person name="Hammon N."/>
            <person name="Israni S."/>
            <person name="Dalin E."/>
            <person name="Tice H."/>
            <person name="Pitluck S."/>
            <person name="Sims D.R."/>
            <person name="Brettin T."/>
            <person name="Bruce D."/>
            <person name="Han C."/>
            <person name="Tapia R."/>
            <person name="Brainard J."/>
            <person name="Schmutz J."/>
            <person name="Larimer F."/>
            <person name="Land M."/>
            <person name="Hauser L."/>
            <person name="Kyrpides N."/>
            <person name="Mikhailova N."/>
            <person name="Brettar I."/>
            <person name="Klappenbach J."/>
            <person name="Konstantinidis K."/>
            <person name="Rodrigues J."/>
            <person name="Tiedje J."/>
            <person name="Richardson P."/>
        </authorList>
    </citation>
    <scope>NUCLEOTIDE SEQUENCE [LARGE SCALE GENOMIC DNA]</scope>
    <source>
        <strain>OS155 / ATCC BAA-1091</strain>
    </source>
</reference>
<feature type="chain" id="PRO_1000200848" description="23S rRNA (uracil(1939)-C(5))-methyltransferase RlmD">
    <location>
        <begin position="1"/>
        <end position="450"/>
    </location>
</feature>
<feature type="domain" description="TRAM" evidence="1">
    <location>
        <begin position="12"/>
        <end position="70"/>
    </location>
</feature>
<feature type="active site" description="Nucleophile" evidence="1">
    <location>
        <position position="406"/>
    </location>
</feature>
<feature type="binding site" evidence="1">
    <location>
        <position position="83"/>
    </location>
    <ligand>
        <name>[4Fe-4S] cluster</name>
        <dbReference type="ChEBI" id="CHEBI:49883"/>
    </ligand>
</feature>
<feature type="binding site" evidence="1">
    <location>
        <position position="89"/>
    </location>
    <ligand>
        <name>[4Fe-4S] cluster</name>
        <dbReference type="ChEBI" id="CHEBI:49883"/>
    </ligand>
</feature>
<feature type="binding site" evidence="1">
    <location>
        <position position="92"/>
    </location>
    <ligand>
        <name>[4Fe-4S] cluster</name>
        <dbReference type="ChEBI" id="CHEBI:49883"/>
    </ligand>
</feature>
<feature type="binding site" evidence="1">
    <location>
        <position position="171"/>
    </location>
    <ligand>
        <name>[4Fe-4S] cluster</name>
        <dbReference type="ChEBI" id="CHEBI:49883"/>
    </ligand>
</feature>
<feature type="binding site" evidence="1">
    <location>
        <position position="283"/>
    </location>
    <ligand>
        <name>S-adenosyl-L-methionine</name>
        <dbReference type="ChEBI" id="CHEBI:59789"/>
    </ligand>
</feature>
<feature type="binding site" evidence="1">
    <location>
        <position position="312"/>
    </location>
    <ligand>
        <name>S-adenosyl-L-methionine</name>
        <dbReference type="ChEBI" id="CHEBI:59789"/>
    </ligand>
</feature>
<feature type="binding site" evidence="1">
    <location>
        <position position="317"/>
    </location>
    <ligand>
        <name>S-adenosyl-L-methionine</name>
        <dbReference type="ChEBI" id="CHEBI:59789"/>
    </ligand>
</feature>
<feature type="binding site" evidence="1">
    <location>
        <position position="333"/>
    </location>
    <ligand>
        <name>S-adenosyl-L-methionine</name>
        <dbReference type="ChEBI" id="CHEBI:59789"/>
    </ligand>
</feature>
<feature type="binding site" evidence="1">
    <location>
        <position position="360"/>
    </location>
    <ligand>
        <name>S-adenosyl-L-methionine</name>
        <dbReference type="ChEBI" id="CHEBI:59789"/>
    </ligand>
</feature>
<feature type="binding site" evidence="1">
    <location>
        <position position="380"/>
    </location>
    <ligand>
        <name>S-adenosyl-L-methionine</name>
        <dbReference type="ChEBI" id="CHEBI:59789"/>
    </ligand>
</feature>
<comment type="function">
    <text evidence="1">Catalyzes the formation of 5-methyl-uridine at position 1939 (m5U1939) in 23S rRNA.</text>
</comment>
<comment type="catalytic activity">
    <reaction evidence="1">
        <text>uridine(1939) in 23S rRNA + S-adenosyl-L-methionine = 5-methyluridine(1939) in 23S rRNA + S-adenosyl-L-homocysteine + H(+)</text>
        <dbReference type="Rhea" id="RHEA:42908"/>
        <dbReference type="Rhea" id="RHEA-COMP:10278"/>
        <dbReference type="Rhea" id="RHEA-COMP:10279"/>
        <dbReference type="ChEBI" id="CHEBI:15378"/>
        <dbReference type="ChEBI" id="CHEBI:57856"/>
        <dbReference type="ChEBI" id="CHEBI:59789"/>
        <dbReference type="ChEBI" id="CHEBI:65315"/>
        <dbReference type="ChEBI" id="CHEBI:74447"/>
        <dbReference type="EC" id="2.1.1.190"/>
    </reaction>
</comment>
<comment type="similarity">
    <text evidence="1">Belongs to the class I-like SAM-binding methyltransferase superfamily. RNA M5U methyltransferase family. RlmD subfamily.</text>
</comment>
<keyword id="KW-0004">4Fe-4S</keyword>
<keyword id="KW-0408">Iron</keyword>
<keyword id="KW-0411">Iron-sulfur</keyword>
<keyword id="KW-0479">Metal-binding</keyword>
<keyword id="KW-0489">Methyltransferase</keyword>
<keyword id="KW-1185">Reference proteome</keyword>
<keyword id="KW-0698">rRNA processing</keyword>
<keyword id="KW-0949">S-adenosyl-L-methionine</keyword>
<keyword id="KW-0808">Transferase</keyword>